<sequence>TKCYKTGDRIISEACPPGQDLCYMKTWCDVFCGTRGRVIELGCTATCPTVKPHEQITCCSTDNCDPHHKMLQ</sequence>
<protein>
    <recommendedName>
        <fullName>Long neurotoxin OH-5</fullName>
    </recommendedName>
    <alternativeName>
        <fullName>Alpha-neurotoxin</fullName>
    </alternativeName>
</protein>
<evidence type="ECO:0000250" key="1"/>
<evidence type="ECO:0000250" key="2">
    <source>
        <dbReference type="UniProtKB" id="P60615"/>
    </source>
</evidence>
<evidence type="ECO:0000269" key="3">
    <source>
    </source>
</evidence>
<evidence type="ECO:0000305" key="4"/>
<accession>P80965</accession>
<feature type="chain" id="PRO_0000093560" description="Long neurotoxin OH-5">
    <location>
        <begin position="1"/>
        <end position="72"/>
    </location>
</feature>
<feature type="disulfide bond" evidence="1">
    <location>
        <begin position="3"/>
        <end position="22"/>
    </location>
</feature>
<feature type="disulfide bond" evidence="1">
    <location>
        <begin position="15"/>
        <end position="43"/>
    </location>
</feature>
<feature type="disulfide bond" evidence="1">
    <location>
        <begin position="28"/>
        <end position="32"/>
    </location>
</feature>
<feature type="disulfide bond" evidence="1">
    <location>
        <begin position="47"/>
        <end position="58"/>
    </location>
</feature>
<feature type="disulfide bond" evidence="1">
    <location>
        <begin position="59"/>
        <end position="64"/>
    </location>
</feature>
<proteinExistence type="evidence at protein level"/>
<comment type="function">
    <text evidence="2">Binds with high affinity to muscular (alpha-1/CHRNA1) and neuronal (alpha-7/CHRNA7) nicotinic acetylcholine receptor (nAChR) and inhibits acetylcholine from binding to the receptor, thereby impairing neuromuscular and neuronal transmission.</text>
</comment>
<comment type="subcellular location">
    <subcellularLocation>
        <location evidence="3">Secreted</location>
    </subcellularLocation>
</comment>
<comment type="tissue specificity">
    <text evidence="4">Expressed by the venom gland.</text>
</comment>
<comment type="toxic dose">
    <text evidence="3">LD(50) is 0.25 mg/kg by intraperitoneal injection into mice.</text>
</comment>
<comment type="similarity">
    <text evidence="4">Belongs to the three-finger toxin family. Long-chain subfamily. Type II alpha-neurotoxin sub-subfamily.</text>
</comment>
<dbReference type="SMR" id="P80965"/>
<dbReference type="GO" id="GO:0005576">
    <property type="term" value="C:extracellular region"/>
    <property type="evidence" value="ECO:0007669"/>
    <property type="project" value="UniProtKB-SubCell"/>
</dbReference>
<dbReference type="GO" id="GO:0030550">
    <property type="term" value="F:acetylcholine receptor inhibitor activity"/>
    <property type="evidence" value="ECO:0007669"/>
    <property type="project" value="UniProtKB-KW"/>
</dbReference>
<dbReference type="GO" id="GO:0099106">
    <property type="term" value="F:ion channel regulator activity"/>
    <property type="evidence" value="ECO:0007669"/>
    <property type="project" value="UniProtKB-KW"/>
</dbReference>
<dbReference type="GO" id="GO:0090729">
    <property type="term" value="F:toxin activity"/>
    <property type="evidence" value="ECO:0007669"/>
    <property type="project" value="UniProtKB-KW"/>
</dbReference>
<dbReference type="CDD" id="cd00206">
    <property type="entry name" value="TFP_snake_toxin"/>
    <property type="match status" value="1"/>
</dbReference>
<dbReference type="Gene3D" id="2.10.60.10">
    <property type="entry name" value="CD59"/>
    <property type="match status" value="1"/>
</dbReference>
<dbReference type="InterPro" id="IPR003571">
    <property type="entry name" value="Snake_3FTx"/>
</dbReference>
<dbReference type="InterPro" id="IPR045860">
    <property type="entry name" value="Snake_toxin-like_sf"/>
</dbReference>
<dbReference type="InterPro" id="IPR018354">
    <property type="entry name" value="Snake_toxin_con_site"/>
</dbReference>
<dbReference type="InterPro" id="IPR054131">
    <property type="entry name" value="Toxin_cobra-type"/>
</dbReference>
<dbReference type="Pfam" id="PF21947">
    <property type="entry name" value="Toxin_cobra-type"/>
    <property type="match status" value="1"/>
</dbReference>
<dbReference type="SUPFAM" id="SSF57302">
    <property type="entry name" value="Snake toxin-like"/>
    <property type="match status" value="1"/>
</dbReference>
<dbReference type="PROSITE" id="PS00272">
    <property type="entry name" value="SNAKE_TOXIN"/>
    <property type="match status" value="1"/>
</dbReference>
<organism>
    <name type="scientific">Ophiophagus hannah</name>
    <name type="common">King cobra</name>
    <name type="synonym">Naja hannah</name>
    <dbReference type="NCBI Taxonomy" id="8665"/>
    <lineage>
        <taxon>Eukaryota</taxon>
        <taxon>Metazoa</taxon>
        <taxon>Chordata</taxon>
        <taxon>Craniata</taxon>
        <taxon>Vertebrata</taxon>
        <taxon>Euteleostomi</taxon>
        <taxon>Lepidosauria</taxon>
        <taxon>Squamata</taxon>
        <taxon>Bifurcata</taxon>
        <taxon>Unidentata</taxon>
        <taxon>Episquamata</taxon>
        <taxon>Toxicofera</taxon>
        <taxon>Serpentes</taxon>
        <taxon>Colubroidea</taxon>
        <taxon>Elapidae</taxon>
        <taxon>Elapinae</taxon>
        <taxon>Ophiophagus</taxon>
    </lineage>
</organism>
<keyword id="KW-0008">Acetylcholine receptor inhibiting toxin</keyword>
<keyword id="KW-0903">Direct protein sequencing</keyword>
<keyword id="KW-1015">Disulfide bond</keyword>
<keyword id="KW-0872">Ion channel impairing toxin</keyword>
<keyword id="KW-0528">Neurotoxin</keyword>
<keyword id="KW-0629">Postsynaptic neurotoxin</keyword>
<keyword id="KW-0964">Secreted</keyword>
<keyword id="KW-0800">Toxin</keyword>
<reference key="1">
    <citation type="journal article" date="1997" name="J. Biochem.">
        <title>Amino acid sequence and chemical modification of a novel alpha-neurotoxin (Oh-5) from king cobra (Ophiophagus hannah) venom.</title>
        <authorList>
            <person name="Lin S.-R."/>
            <person name="Leu L.-F."/>
            <person name="Chang L.-S."/>
            <person name="Chang C.-C."/>
        </authorList>
    </citation>
    <scope>PROTEIN SEQUENCE</scope>
    <scope>TOXIC DOSE</scope>
    <scope>SUBCELLULAR LOCATION</scope>
    <source>
        <tissue>Venom</tissue>
    </source>
</reference>
<name>3L25_OPHHA</name>